<proteinExistence type="evidence at protein level"/>
<feature type="signal peptide" evidence="2">
    <location>
        <begin position="1"/>
        <end position="22"/>
    </location>
</feature>
<feature type="propeptide" id="PRO_0000456112" evidence="8 9">
    <location>
        <begin position="23"/>
        <end position="69"/>
    </location>
</feature>
<feature type="peptide" id="PRO_0000456113" description="Consomatin G1" evidence="8 9">
    <location>
        <begin position="70"/>
        <end position="78"/>
    </location>
</feature>
<feature type="propeptide" id="PRO_0000456114" evidence="8 9">
    <location>
        <begin position="79"/>
        <end position="93"/>
    </location>
</feature>
<feature type="modified residue" description="D-tryptophan" evidence="1 8">
    <location>
        <position position="74"/>
    </location>
</feature>
<feature type="disulfide bond" evidence="1 8">
    <location>
        <begin position="72"/>
        <end position="77"/>
    </location>
</feature>
<name>CSST1_CONGE</name>
<organism>
    <name type="scientific">Conus geographus</name>
    <name type="common">Geography cone</name>
    <name type="synonym">Nubecula geographus</name>
    <dbReference type="NCBI Taxonomy" id="6491"/>
    <lineage>
        <taxon>Eukaryota</taxon>
        <taxon>Metazoa</taxon>
        <taxon>Spiralia</taxon>
        <taxon>Lophotrochozoa</taxon>
        <taxon>Mollusca</taxon>
        <taxon>Gastropoda</taxon>
        <taxon>Caenogastropoda</taxon>
        <taxon>Neogastropoda</taxon>
        <taxon>Conoidea</taxon>
        <taxon>Conidae</taxon>
        <taxon>Conus</taxon>
        <taxon>Gastridium</taxon>
    </lineage>
</organism>
<accession>P0DW18</accession>
<reference key="1">
    <citation type="journal article" date="2022" name="Sci. Adv.">
        <title>Somatostatin venom analogs evolved by fish-hunting cone snails: from prey capture behavior to identifying drug leads.</title>
        <authorList>
            <person name="Ramiro I.B.L."/>
            <person name="Bjoern-Yoshimoto W.E."/>
            <person name="Imperial J.S."/>
            <person name="Gajewiak J."/>
            <person name="Salcedo P.F."/>
            <person name="Watkins M."/>
            <person name="Taylor D."/>
            <person name="Resager W."/>
            <person name="Ueberheide B."/>
            <person name="Braeuner-Osborne H."/>
            <person name="Whitby F.G."/>
            <person name="Hill C.P."/>
            <person name="Martin L.F."/>
            <person name="Patwardhan A."/>
            <person name="Concepcion G.P."/>
            <person name="Olivera B.M."/>
            <person name="Safavi-Hemami H."/>
        </authorList>
    </citation>
    <scope>NUCLEOTIDE SEQUENCE [MRNA]</scope>
    <scope>FUNCTION</scope>
    <scope>3D-STRUCTURE MODELING</scope>
    <scope>SYNTHESIS OF 70-78</scope>
    <scope>PROBABLE D-AMINO ACID AT TRP-74</scope>
    <scope>PROBABLE DISULFIDE BOND</scope>
    <source>
        <tissue>Venom duct</tissue>
    </source>
</reference>
<reference key="2">
    <citation type="journal article" date="2022" name="Mol. Biol. Evol.">
        <title>Reconstructing the origins of the somatostatin and allatostatin-C signaling systems using the accelerated evolution of biodiverse cone snail venoms.</title>
        <authorList>
            <person name="Koch T.L."/>
            <person name="Ramiro I.B.L."/>
            <person name="Florez-Salcedo P."/>
            <person name="Engholm E."/>
            <person name="Jensen K.J."/>
            <person name="Chase K."/>
            <person name="Olivera B.M."/>
            <person name="Bjoern-Yoshimoto W.E."/>
            <person name="Safavi-Hemami H."/>
        </authorList>
    </citation>
    <scope>NUCLEOTIDE SEQUENCE [MRNA]</scope>
    <source>
        <tissue>Venom duct</tissue>
    </source>
</reference>
<keyword id="KW-0208">D-amino acid</keyword>
<keyword id="KW-1015">Disulfide bond</keyword>
<keyword id="KW-1213">G-protein coupled receptor impairing toxin</keyword>
<keyword id="KW-0964">Secreted</keyword>
<keyword id="KW-0732">Signal</keyword>
<keyword id="KW-0800">Toxin</keyword>
<evidence type="ECO:0000250" key="1">
    <source>
        <dbReference type="UniProtKB" id="P0DQT5"/>
    </source>
</evidence>
<evidence type="ECO:0000255" key="2"/>
<evidence type="ECO:0000269" key="3">
    <source>
    </source>
</evidence>
<evidence type="ECO:0000269" key="4">
    <source>
    </source>
</evidence>
<evidence type="ECO:0000303" key="5">
    <source>
    </source>
</evidence>
<evidence type="ECO:0000303" key="6">
    <source>
    </source>
</evidence>
<evidence type="ECO:0000305" key="7"/>
<evidence type="ECO:0000305" key="8">
    <source>
    </source>
</evidence>
<evidence type="ECO:0000305" key="9">
    <source>
    </source>
</evidence>
<dbReference type="GO" id="GO:0005576">
    <property type="term" value="C:extracellular region"/>
    <property type="evidence" value="ECO:0007669"/>
    <property type="project" value="UniProtKB-SubCell"/>
</dbReference>
<dbReference type="GO" id="GO:0090729">
    <property type="term" value="F:toxin activity"/>
    <property type="evidence" value="ECO:0007669"/>
    <property type="project" value="UniProtKB-KW"/>
</dbReference>
<sequence length="93" mass="10798">MQTAYWVMLMMMVCITAPLPEGGKPNSGIRGLVPNDLTPQHTLRSLISRRQTDVLLDATLLTTPAPEQRLFCFWKSCWPRPYPWRRRDLNGKR</sequence>
<comment type="function">
    <text evidence="3">Potently activates human somatostatin receptors (SSTR) with a specific activation of SSTR2 (EC(50)=2.6 nM).</text>
</comment>
<comment type="subcellular location">
    <subcellularLocation>
        <location evidence="8">Secreted</location>
    </subcellularLocation>
</comment>
<comment type="tissue specificity">
    <text evidence="8">Expressed by the venom duct.</text>
</comment>
<comment type="domain">
    <text evidence="7">The cysteine framework is C-C.</text>
</comment>
<comment type="biotechnology">
    <text evidence="8">Given that the SSTR2 is an important pharmacological target for the treatment of acromegaly and neuroendocrine tumors, this peptide has potential as a therapeutic for the treatment of these disorders.</text>
</comment>
<comment type="miscellaneous">
    <text evidence="4">Consomatins evolved by gene duplication of a 'Somatostatin and related peptides (SSRP)' gene expressed in the snail neuroendocrine system. In addition, this peptide adopts nearly identical conformations as in the somatostatin drug analog Octreotide. As this drug, it contains a D-Trp at the same position, whose synthesis is a common strategy used for enhancing the metabolic stability of compounds in drug design.</text>
</comment>
<comment type="miscellaneous">
    <text evidence="1">Negative results: does not activate any of the other 313 GPCRs tested. Shows little or no activating activity at the SSTR2, SSTR3 and SSTR5.</text>
</comment>
<comment type="similarity">
    <text evidence="7">Belongs to the conotoxin C superfamily. Consomatin family.</text>
</comment>
<protein>
    <recommendedName>
        <fullName evidence="5">Consomatin G1</fullName>
        <shortName evidence="6">ConSST G1</shortName>
    </recommendedName>
    <alternativeName>
        <fullName evidence="6">Somatostatin-related peptide</fullName>
        <shortName evidence="6">SSRP</shortName>
    </alternativeName>
</protein>